<name>RIP1_BRYDI</name>
<organism>
    <name type="scientific">Bryonia dioica</name>
    <name type="common">Red bryony</name>
    <name type="synonym">Bryonia cretica subsp. dioica</name>
    <dbReference type="NCBI Taxonomy" id="3652"/>
    <lineage>
        <taxon>Eukaryota</taxon>
        <taxon>Viridiplantae</taxon>
        <taxon>Streptophyta</taxon>
        <taxon>Embryophyta</taxon>
        <taxon>Tracheophyta</taxon>
        <taxon>Spermatophyta</taxon>
        <taxon>Magnoliopsida</taxon>
        <taxon>eudicotyledons</taxon>
        <taxon>Gunneridae</taxon>
        <taxon>Pentapetalae</taxon>
        <taxon>rosids</taxon>
        <taxon>fabids</taxon>
        <taxon>Cucurbitales</taxon>
        <taxon>Cucurbitaceae</taxon>
        <taxon>Bryonieae</taxon>
        <taxon>Bryonia</taxon>
    </lineage>
</organism>
<proteinExistence type="evidence at protein level"/>
<reference key="1">
    <citation type="journal article" date="1997" name="Biochemistry">
        <title>Molecular, biological, and preliminary structural analysis of recombinant bryodin 1, a ribosome-inactivating protein from the plant Bryonia dioica.</title>
        <authorList>
            <person name="Gawlak S.L."/>
            <person name="Neubauer M."/>
            <person name="Klei H.E."/>
            <person name="Chang C.Y.Y."/>
            <person name="Einspahr H.M."/>
            <person name="Siegall C.B."/>
        </authorList>
    </citation>
    <scope>NUCLEOTIDE SEQUENCE</scope>
    <scope>MUTAGENESIS OF GLU-212</scope>
    <scope>X-RAY CRYSTALLOGRAPHY (2.1 ANGSTROMS)</scope>
    <source>
        <tissue>Leaf</tissue>
    </source>
</reference>
<reference key="2">
    <citation type="patent" date="1996-07-30" number="US5541110">
        <title>Cloning and expression of a gene encoding bryodin 1 from Bryonia dioica.</title>
        <authorList>
            <person name="Siegall C.B."/>
        </authorList>
    </citation>
    <scope>NUCLEOTIDE SEQUENCE</scope>
</reference>
<reference key="3">
    <citation type="journal article" date="1989" name="Int. J. Pept. Protein Res.">
        <title>N-terminal sequence of some ribosome-inactivating proteins.</title>
        <authorList>
            <person name="Montecucchi P.-C."/>
            <person name="Lazzarini A.M."/>
            <person name="Barbieri L."/>
            <person name="Stirpe F."/>
            <person name="Soria M."/>
            <person name="Lappi D."/>
        </authorList>
    </citation>
    <scope>PROTEIN SEQUENCE OF 24-66</scope>
    <source>
        <tissue>Seed</tissue>
    </source>
</reference>
<reference key="4">
    <citation type="journal article" date="1994" name="Bioconj. Chem.">
        <title>Characterization of ribosome-inactivating proteins isolated from Bryonia dioica and their utility as carcinoma-reactive immunoconjugates.</title>
        <authorList>
            <person name="Siegall C.B."/>
            <person name="Gawlak S.L."/>
            <person name="Chace D."/>
            <person name="Wolff E.A."/>
            <person name="Mixan B."/>
            <person name="Marquardt H."/>
        </authorList>
    </citation>
    <scope>PROTEIN SEQUENCE OF 24-43</scope>
    <source>
        <tissue>Root</tissue>
    </source>
</reference>
<keyword id="KW-0002">3D-structure</keyword>
<keyword id="KW-0903">Direct protein sequencing</keyword>
<keyword id="KW-0325">Glycoprotein</keyword>
<keyword id="KW-0378">Hydrolase</keyword>
<keyword id="KW-0611">Plant defense</keyword>
<keyword id="KW-0652">Protein synthesis inhibitor</keyword>
<keyword id="KW-0732">Signal</keyword>
<keyword id="KW-0800">Toxin</keyword>
<evidence type="ECO:0000250" key="1"/>
<evidence type="ECO:0000255" key="2"/>
<evidence type="ECO:0000269" key="3">
    <source>
    </source>
</evidence>
<evidence type="ECO:0000269" key="4">
    <source>
    </source>
</evidence>
<evidence type="ECO:0000269" key="5">
    <source>
    </source>
</evidence>
<evidence type="ECO:0000305" key="6"/>
<evidence type="ECO:0007829" key="7">
    <source>
        <dbReference type="PDB" id="1BRY"/>
    </source>
</evidence>
<feature type="signal peptide" evidence="3 4">
    <location>
        <begin position="1"/>
        <end position="23"/>
    </location>
</feature>
<feature type="chain" id="PRO_0000030754" description="Ribosome-inactivating protein bryodin I">
    <location>
        <begin position="24"/>
        <end position="270"/>
    </location>
</feature>
<feature type="propeptide" id="PRO_0000030755" description="Removed in mature form">
    <location>
        <begin position="271"/>
        <end position="290"/>
    </location>
</feature>
<feature type="active site" evidence="1">
    <location>
        <position position="183"/>
    </location>
</feature>
<feature type="active site">
    <location>
        <position position="212"/>
    </location>
</feature>
<feature type="glycosylation site" description="N-linked (GlcNAc...) asparagine" evidence="2">
    <location>
        <position position="214"/>
    </location>
</feature>
<feature type="glycosylation site" description="N-linked (GlcNAc...) asparagine" evidence="2">
    <location>
        <position position="250"/>
    </location>
</feature>
<feature type="mutagenesis site" description="10-fold reduction in activity." evidence="5">
    <original>E</original>
    <variation>K</variation>
    <location>
        <position position="212"/>
    </location>
</feature>
<feature type="sequence conflict" description="In Ref. 3; AA sequence." evidence="6" ref="3">
    <original>RSSIS</original>
    <variation>LRHXI</variation>
    <location>
        <begin position="61"/>
        <end position="65"/>
    </location>
</feature>
<feature type="strand" evidence="7">
    <location>
        <begin position="25"/>
        <end position="29"/>
    </location>
</feature>
<feature type="helix" evidence="7">
    <location>
        <begin position="34"/>
        <end position="46"/>
    </location>
</feature>
<feature type="strand" evidence="7">
    <location>
        <begin position="50"/>
        <end position="54"/>
    </location>
</feature>
<feature type="strand" evidence="7">
    <location>
        <begin position="57"/>
        <end position="60"/>
    </location>
</feature>
<feature type="helix" evidence="7">
    <location>
        <begin position="66"/>
        <end position="69"/>
    </location>
</feature>
<feature type="strand" evidence="7">
    <location>
        <begin position="70"/>
        <end position="76"/>
    </location>
</feature>
<feature type="strand" evidence="7">
    <location>
        <begin position="82"/>
        <end position="88"/>
    </location>
</feature>
<feature type="turn" evidence="7">
    <location>
        <begin position="89"/>
        <end position="91"/>
    </location>
</feature>
<feature type="strand" evidence="7">
    <location>
        <begin position="94"/>
        <end position="99"/>
    </location>
</feature>
<feature type="strand" evidence="7">
    <location>
        <begin position="102"/>
        <end position="105"/>
    </location>
</feature>
<feature type="helix" evidence="7">
    <location>
        <begin position="109"/>
        <end position="114"/>
    </location>
</feature>
<feature type="turn" evidence="7">
    <location>
        <begin position="115"/>
        <end position="117"/>
    </location>
</feature>
<feature type="strand" evidence="7">
    <location>
        <begin position="123"/>
        <end position="127"/>
    </location>
</feature>
<feature type="helix" evidence="7">
    <location>
        <begin position="134"/>
        <end position="141"/>
    </location>
</feature>
<feature type="helix" evidence="7">
    <location>
        <begin position="145"/>
        <end position="147"/>
    </location>
</feature>
<feature type="helix" evidence="7">
    <location>
        <begin position="152"/>
        <end position="163"/>
    </location>
</feature>
<feature type="helix" evidence="7">
    <location>
        <begin position="167"/>
        <end position="180"/>
    </location>
</feature>
<feature type="helix" evidence="7">
    <location>
        <begin position="182"/>
        <end position="186"/>
    </location>
</feature>
<feature type="helix" evidence="7">
    <location>
        <begin position="188"/>
        <end position="196"/>
    </location>
</feature>
<feature type="strand" evidence="7">
    <location>
        <begin position="198"/>
        <end position="200"/>
    </location>
</feature>
<feature type="helix" evidence="7">
    <location>
        <begin position="206"/>
        <end position="213"/>
    </location>
</feature>
<feature type="helix" evidence="7">
    <location>
        <begin position="215"/>
        <end position="225"/>
    </location>
</feature>
<feature type="turn" evidence="7">
    <location>
        <begin position="226"/>
        <end position="230"/>
    </location>
</feature>
<feature type="strand" evidence="7">
    <location>
        <begin position="231"/>
        <end position="239"/>
    </location>
</feature>
<feature type="strand" evidence="7">
    <location>
        <begin position="245"/>
        <end position="250"/>
    </location>
</feature>
<feature type="helix" evidence="7">
    <location>
        <begin position="254"/>
        <end position="257"/>
    </location>
</feature>
<feature type="helix" evidence="7">
    <location>
        <begin position="266"/>
        <end position="268"/>
    </location>
</feature>
<accession>P33185</accession>
<accession>Q9S8I9</accession>
<dbReference type="EC" id="3.2.2.22"/>
<dbReference type="EMBL" id="I24020">
    <property type="status" value="NOT_ANNOTATED_CDS"/>
    <property type="molecule type" value="Unassigned_DNA"/>
</dbReference>
<dbReference type="PIR" id="S16491">
    <property type="entry name" value="S16491"/>
</dbReference>
<dbReference type="PDB" id="1BRY">
    <property type="method" value="X-ray"/>
    <property type="resolution" value="2.10 A"/>
    <property type="chains" value="Y/Z=24-270"/>
</dbReference>
<dbReference type="PDBsum" id="1BRY"/>
<dbReference type="SMR" id="P33185"/>
<dbReference type="EvolutionaryTrace" id="P33185"/>
<dbReference type="GO" id="GO:0030598">
    <property type="term" value="F:rRNA N-glycosylase activity"/>
    <property type="evidence" value="ECO:0007669"/>
    <property type="project" value="UniProtKB-EC"/>
</dbReference>
<dbReference type="GO" id="GO:0090729">
    <property type="term" value="F:toxin activity"/>
    <property type="evidence" value="ECO:0007669"/>
    <property type="project" value="UniProtKB-KW"/>
</dbReference>
<dbReference type="GO" id="GO:0006952">
    <property type="term" value="P:defense response"/>
    <property type="evidence" value="ECO:0007669"/>
    <property type="project" value="UniProtKB-KW"/>
</dbReference>
<dbReference type="GO" id="GO:0017148">
    <property type="term" value="P:negative regulation of translation"/>
    <property type="evidence" value="ECO:0007669"/>
    <property type="project" value="UniProtKB-KW"/>
</dbReference>
<dbReference type="Gene3D" id="3.40.420.10">
    <property type="entry name" value="Ricin (A subunit), domain 1"/>
    <property type="match status" value="1"/>
</dbReference>
<dbReference type="Gene3D" id="4.10.470.10">
    <property type="entry name" value="Ricin (A Subunit), domain 2"/>
    <property type="match status" value="1"/>
</dbReference>
<dbReference type="InterPro" id="IPR036041">
    <property type="entry name" value="Ribosome-inact_prot_sf"/>
</dbReference>
<dbReference type="InterPro" id="IPR017989">
    <property type="entry name" value="Ribosome_inactivat_1/2"/>
</dbReference>
<dbReference type="InterPro" id="IPR001574">
    <property type="entry name" value="Ribosome_inactivat_prot"/>
</dbReference>
<dbReference type="InterPro" id="IPR017988">
    <property type="entry name" value="Ribosome_inactivat_prot_CS"/>
</dbReference>
<dbReference type="InterPro" id="IPR016138">
    <property type="entry name" value="Ribosome_inactivat_prot_sub1"/>
</dbReference>
<dbReference type="InterPro" id="IPR016139">
    <property type="entry name" value="Ribosome_inactivat_prot_sub2"/>
</dbReference>
<dbReference type="PANTHER" id="PTHR33453">
    <property type="match status" value="1"/>
</dbReference>
<dbReference type="PANTHER" id="PTHR33453:SF34">
    <property type="entry name" value="RIBOSOME-INACTIVATING PROTEIN"/>
    <property type="match status" value="1"/>
</dbReference>
<dbReference type="Pfam" id="PF00161">
    <property type="entry name" value="RIP"/>
    <property type="match status" value="1"/>
</dbReference>
<dbReference type="PRINTS" id="PR00396">
    <property type="entry name" value="SHIGARICIN"/>
</dbReference>
<dbReference type="SUPFAM" id="SSF56371">
    <property type="entry name" value="Ribosome inactivating proteins (RIP)"/>
    <property type="match status" value="1"/>
</dbReference>
<dbReference type="PROSITE" id="PS00275">
    <property type="entry name" value="SHIGA_RICIN"/>
    <property type="match status" value="1"/>
</dbReference>
<protein>
    <recommendedName>
        <fullName>Ribosome-inactivating protein bryodin I</fullName>
        <ecNumber>3.2.2.22</ecNumber>
    </recommendedName>
    <alternativeName>
        <fullName>BD1</fullName>
    </alternativeName>
    <alternativeName>
        <fullName>rRNA N-glycosidase</fullName>
    </alternativeName>
</protein>
<sequence>MIKLLVLWLLILTIFLKSPTVEGDVSFRLSGATTTSYGVFIKNLREALPYERKVYNIPLLRSSISGSGRYTLLHLTNYADETISVAVDVTNVYIMGYLAGDVSYFFNEASATEAAKFVFKDAKKKVTLPYSGNYERLQTAAGKIRENIPLGLPALDSAITTLYYYTASSAASALLVLIQSTAESARYKFIEQQIGKRVDKTFLPSLATISLENNWSALSKQIQIASTNNGQFESPVVLIDGNNQRVSITNASARVVTSNIALLLNRNNIAAIGEDISMTLIGFEHGLYGI</sequence>
<comment type="function">
    <text>Ribosome-inactivating protein of type 1, inhibits protein synthesis in animal cells.</text>
</comment>
<comment type="catalytic activity">
    <reaction>
        <text>Endohydrolysis of the N-glycosidic bond at one specific adenosine on the 28S rRNA.</text>
        <dbReference type="EC" id="3.2.2.22"/>
    </reaction>
</comment>
<comment type="PTM">
    <text>Appears to undergo proteolytic cleavage in the C-terminal to produce a shorter protein.</text>
</comment>
<comment type="biotechnology">
    <text>Especially useful as immunotoxin for pharmacological applications as it has low toxicity in rats and mice but is potent once inside target cells.</text>
</comment>
<comment type="similarity">
    <text evidence="6">Belongs to the ribosome-inactivating protein family. Type 1 RIP subfamily.</text>
</comment>